<evidence type="ECO:0000250" key="1">
    <source>
        <dbReference type="UniProtKB" id="Q9UK53"/>
    </source>
</evidence>
<evidence type="ECO:0000255" key="2">
    <source>
        <dbReference type="PROSITE-ProRule" id="PRU00146"/>
    </source>
</evidence>
<evidence type="ECO:0000256" key="3">
    <source>
        <dbReference type="SAM" id="MobiDB-lite"/>
    </source>
</evidence>
<evidence type="ECO:0000269" key="4">
    <source>
    </source>
</evidence>
<evidence type="ECO:0000269" key="5">
    <source>
    </source>
</evidence>
<evidence type="ECO:0000269" key="6">
    <source>
    </source>
</evidence>
<evidence type="ECO:0000269" key="7">
    <source>
    </source>
</evidence>
<evidence type="ECO:0000269" key="8">
    <source>
    </source>
</evidence>
<evidence type="ECO:0000269" key="9">
    <source>
    </source>
</evidence>
<evidence type="ECO:0000269" key="10">
    <source>
    </source>
</evidence>
<evidence type="ECO:0000269" key="11">
    <source>
    </source>
</evidence>
<evidence type="ECO:0000269" key="12">
    <source>
    </source>
</evidence>
<evidence type="ECO:0000305" key="13"/>
<evidence type="ECO:0007829" key="14">
    <source>
        <dbReference type="PDB" id="8HPO"/>
    </source>
</evidence>
<comment type="function">
    <text evidence="4 5 6">Component of the RPD3C(L) histone deacetylase complex (HDAC) responsible for the deacetylation of lysine residues on the N-terminal part of the core histones (H2A, H2B, H3 and H4). Histone deacetylation gives a tag for epigenetic repression and plays an important role in transcriptional regulation, cell cycle progression and developmental events.</text>
</comment>
<comment type="subunit">
    <text evidence="5 6 10 11 12">Interacts with H3K4me3 and to a lesser extent with H3K4me2. Component of the RPD3C(L) complex composed of at least ASH1, CTI6, DEP1, PHO23, RPD3, RXT2, RXT3, SAP30, SDS3, SIN3, UME1 and UME6.</text>
</comment>
<comment type="subcellular location">
    <subcellularLocation>
        <location evidence="7">Nucleus</location>
    </subcellularLocation>
</comment>
<comment type="domain">
    <text evidence="12">The PHD-type zinc finger mediates the binding to H3K4me3.</text>
</comment>
<comment type="miscellaneous">
    <text evidence="8">Present with 3250 molecules/cell in log phase SD medium.</text>
</comment>
<comment type="similarity">
    <text evidence="13">Belongs to the ING family.</text>
</comment>
<dbReference type="EMBL" id="DQ115393">
    <property type="protein sequence ID" value="AAZ22511.1"/>
    <property type="molecule type" value="Genomic_DNA"/>
</dbReference>
<dbReference type="EMBL" id="Z50161">
    <property type="protein sequence ID" value="CAA90529.1"/>
    <property type="molecule type" value="Genomic_DNA"/>
</dbReference>
<dbReference type="EMBL" id="AY693076">
    <property type="protein sequence ID" value="AAT93095.1"/>
    <property type="molecule type" value="Genomic_DNA"/>
</dbReference>
<dbReference type="EMBL" id="Z71373">
    <property type="protein sequence ID" value="CAA95973.1"/>
    <property type="molecule type" value="Genomic_DNA"/>
</dbReference>
<dbReference type="EMBL" id="BK006947">
    <property type="protein sequence ID" value="DAA10449.1"/>
    <property type="molecule type" value="Genomic_DNA"/>
</dbReference>
<dbReference type="PIR" id="S58255">
    <property type="entry name" value="S58255"/>
</dbReference>
<dbReference type="RefSeq" id="NP_014302.3">
    <property type="nucleotide sequence ID" value="NM_001182935.3"/>
</dbReference>
<dbReference type="PDB" id="8GA8">
    <property type="method" value="EM"/>
    <property type="resolution" value="3.50 A"/>
    <property type="chains" value="L=1-330"/>
</dbReference>
<dbReference type="PDB" id="8HPO">
    <property type="method" value="EM"/>
    <property type="resolution" value="2.60 A"/>
    <property type="chains" value="C=1-330"/>
</dbReference>
<dbReference type="PDBsum" id="8GA8"/>
<dbReference type="PDBsum" id="8HPO"/>
<dbReference type="EMDB" id="EMD-29892"/>
<dbReference type="EMDB" id="EMD-34935"/>
<dbReference type="SMR" id="P50947"/>
<dbReference type="BioGRID" id="35726">
    <property type="interactions" value="856"/>
</dbReference>
<dbReference type="ComplexPortal" id="CPX-1852">
    <property type="entry name" value="RPD3L histone deacetylase complex"/>
</dbReference>
<dbReference type="DIP" id="DIP-4243N"/>
<dbReference type="FunCoup" id="P50947">
    <property type="interactions" value="402"/>
</dbReference>
<dbReference type="IntAct" id="P50947">
    <property type="interactions" value="15"/>
</dbReference>
<dbReference type="MINT" id="P50947"/>
<dbReference type="STRING" id="4932.YNL097C"/>
<dbReference type="GlyGen" id="P50947">
    <property type="glycosylation" value="1 site, 1 O-linked glycan (1 site)"/>
</dbReference>
<dbReference type="iPTMnet" id="P50947"/>
<dbReference type="PaxDb" id="4932-YNL097C"/>
<dbReference type="PeptideAtlas" id="P50947"/>
<dbReference type="EnsemblFungi" id="YNL097C_mRNA">
    <property type="protein sequence ID" value="YNL097C"/>
    <property type="gene ID" value="YNL097C"/>
</dbReference>
<dbReference type="GeneID" id="855626"/>
<dbReference type="KEGG" id="sce:YNL097C"/>
<dbReference type="AGR" id="SGD:S000005041"/>
<dbReference type="SGD" id="S000005041">
    <property type="gene designation" value="PHO23"/>
</dbReference>
<dbReference type="VEuPathDB" id="FungiDB:YNL097C"/>
<dbReference type="eggNOG" id="KOG1973">
    <property type="taxonomic scope" value="Eukaryota"/>
</dbReference>
<dbReference type="HOGENOM" id="CLU_031900_2_1_1"/>
<dbReference type="InParanoid" id="P50947"/>
<dbReference type="OMA" id="HEIDAKC"/>
<dbReference type="OrthoDB" id="5411773at2759"/>
<dbReference type="BioCyc" id="YEAST:G3O-33125-MONOMER"/>
<dbReference type="Reactome" id="R-SCE-3899300">
    <property type="pathway name" value="SUMOylation of transcription cofactors"/>
</dbReference>
<dbReference type="Reactome" id="R-SCE-6811555">
    <property type="pathway name" value="PI5P Regulates TP53 Acetylation"/>
</dbReference>
<dbReference type="BioGRID-ORCS" id="855626">
    <property type="hits" value="3 hits in 10 CRISPR screens"/>
</dbReference>
<dbReference type="PRO" id="PR:P50947"/>
<dbReference type="Proteomes" id="UP000002311">
    <property type="component" value="Chromosome XIV"/>
</dbReference>
<dbReference type="RNAct" id="P50947">
    <property type="molecule type" value="protein"/>
</dbReference>
<dbReference type="GO" id="GO:0000118">
    <property type="term" value="C:histone deacetylase complex"/>
    <property type="evidence" value="ECO:0000314"/>
    <property type="project" value="SGD"/>
</dbReference>
<dbReference type="GO" id="GO:0005634">
    <property type="term" value="C:nucleus"/>
    <property type="evidence" value="ECO:0007005"/>
    <property type="project" value="SGD"/>
</dbReference>
<dbReference type="GO" id="GO:0033698">
    <property type="term" value="C:Rpd3L complex"/>
    <property type="evidence" value="ECO:0000314"/>
    <property type="project" value="SGD"/>
</dbReference>
<dbReference type="GO" id="GO:0070210">
    <property type="term" value="C:Rpd3L-Expanded complex"/>
    <property type="evidence" value="ECO:0007005"/>
    <property type="project" value="SGD"/>
</dbReference>
<dbReference type="GO" id="GO:0140002">
    <property type="term" value="F:histone H3K4me3 reader activity"/>
    <property type="evidence" value="ECO:0000314"/>
    <property type="project" value="UniProtKB"/>
</dbReference>
<dbReference type="GO" id="GO:0035064">
    <property type="term" value="F:methylated histone binding"/>
    <property type="evidence" value="ECO:0000314"/>
    <property type="project" value="SGD"/>
</dbReference>
<dbReference type="GO" id="GO:0008270">
    <property type="term" value="F:zinc ion binding"/>
    <property type="evidence" value="ECO:0007669"/>
    <property type="project" value="UniProtKB-KW"/>
</dbReference>
<dbReference type="GO" id="GO:0034605">
    <property type="term" value="P:cellular response to heat"/>
    <property type="evidence" value="ECO:0000315"/>
    <property type="project" value="SGD"/>
</dbReference>
<dbReference type="GO" id="GO:0006325">
    <property type="term" value="P:chromatin organization"/>
    <property type="evidence" value="ECO:0000315"/>
    <property type="project" value="SGD"/>
</dbReference>
<dbReference type="GO" id="GO:0061188">
    <property type="term" value="P:negative regulation of rDNA heterochromatin formation"/>
    <property type="evidence" value="ECO:0000315"/>
    <property type="project" value="SGD"/>
</dbReference>
<dbReference type="GO" id="GO:0061186">
    <property type="term" value="P:negative regulation of silent mating-type cassette heterochromatin formation"/>
    <property type="evidence" value="ECO:0000315"/>
    <property type="project" value="SGD"/>
</dbReference>
<dbReference type="GO" id="GO:0016479">
    <property type="term" value="P:negative regulation of transcription by RNA polymerase I"/>
    <property type="evidence" value="ECO:0000315"/>
    <property type="project" value="SGD"/>
</dbReference>
<dbReference type="GO" id="GO:0006334">
    <property type="term" value="P:nucleosome assembly"/>
    <property type="evidence" value="ECO:0000303"/>
    <property type="project" value="ComplexPortal"/>
</dbReference>
<dbReference type="GO" id="GO:2000219">
    <property type="term" value="P:positive regulation of invasive growth in response to glucose limitation"/>
    <property type="evidence" value="ECO:0000315"/>
    <property type="project" value="SGD"/>
</dbReference>
<dbReference type="GO" id="GO:0045944">
    <property type="term" value="P:positive regulation of transcription by RNA polymerase II"/>
    <property type="evidence" value="ECO:0000315"/>
    <property type="project" value="SGD"/>
</dbReference>
<dbReference type="GO" id="GO:0006355">
    <property type="term" value="P:regulation of DNA-templated transcription"/>
    <property type="evidence" value="ECO:0000318"/>
    <property type="project" value="GO_Central"/>
</dbReference>
<dbReference type="GO" id="GO:0006357">
    <property type="term" value="P:regulation of transcription by RNA polymerase II"/>
    <property type="evidence" value="ECO:0000303"/>
    <property type="project" value="ComplexPortal"/>
</dbReference>
<dbReference type="CDD" id="cd17016">
    <property type="entry name" value="ING_Pho23p_like"/>
    <property type="match status" value="1"/>
</dbReference>
<dbReference type="CDD" id="cd15505">
    <property type="entry name" value="PHD_ING"/>
    <property type="match status" value="1"/>
</dbReference>
<dbReference type="FunFam" id="3.30.40.10:FF:000016">
    <property type="entry name" value="Inhibitor of growth protein"/>
    <property type="match status" value="1"/>
</dbReference>
<dbReference type="Gene3D" id="6.10.140.1740">
    <property type="match status" value="1"/>
</dbReference>
<dbReference type="Gene3D" id="3.30.40.10">
    <property type="entry name" value="Zinc/RING finger domain, C3HC4 (zinc finger)"/>
    <property type="match status" value="1"/>
</dbReference>
<dbReference type="InterPro" id="IPR028651">
    <property type="entry name" value="ING_fam"/>
</dbReference>
<dbReference type="InterPro" id="IPR024610">
    <property type="entry name" value="ING_N_histone-binding"/>
</dbReference>
<dbReference type="InterPro" id="IPR019786">
    <property type="entry name" value="Zinc_finger_PHD-type_CS"/>
</dbReference>
<dbReference type="InterPro" id="IPR011011">
    <property type="entry name" value="Znf_FYVE_PHD"/>
</dbReference>
<dbReference type="InterPro" id="IPR001965">
    <property type="entry name" value="Znf_PHD"/>
</dbReference>
<dbReference type="InterPro" id="IPR019787">
    <property type="entry name" value="Znf_PHD-finger"/>
</dbReference>
<dbReference type="InterPro" id="IPR013083">
    <property type="entry name" value="Znf_RING/FYVE/PHD"/>
</dbReference>
<dbReference type="PANTHER" id="PTHR10333">
    <property type="entry name" value="INHIBITOR OF GROWTH PROTEIN"/>
    <property type="match status" value="1"/>
</dbReference>
<dbReference type="PANTHER" id="PTHR10333:SF42">
    <property type="entry name" value="INHIBITOR OF GROWTH PROTEIN 5"/>
    <property type="match status" value="1"/>
</dbReference>
<dbReference type="Pfam" id="PF12998">
    <property type="entry name" value="ING"/>
    <property type="match status" value="1"/>
</dbReference>
<dbReference type="SMART" id="SM01408">
    <property type="entry name" value="ING"/>
    <property type="match status" value="1"/>
</dbReference>
<dbReference type="SMART" id="SM00249">
    <property type="entry name" value="PHD"/>
    <property type="match status" value="1"/>
</dbReference>
<dbReference type="SUPFAM" id="SSF57903">
    <property type="entry name" value="FYVE/PHD zinc finger"/>
    <property type="match status" value="1"/>
</dbReference>
<dbReference type="PROSITE" id="PS01359">
    <property type="entry name" value="ZF_PHD_1"/>
    <property type="match status" value="1"/>
</dbReference>
<dbReference type="PROSITE" id="PS50016">
    <property type="entry name" value="ZF_PHD_2"/>
    <property type="match status" value="1"/>
</dbReference>
<accession>P50947</accession>
<accession>D6W183</accession>
<accession>Q45TZ9</accession>
<reference key="1">
    <citation type="journal article" date="2005" name="Nat. Genet.">
        <title>Quantitative trait loci mapped to single-nucleotide resolution in yeast.</title>
        <authorList>
            <person name="Deutschbauer A.M."/>
            <person name="Davis R.W."/>
        </authorList>
    </citation>
    <scope>NUCLEOTIDE SEQUENCE [GENOMIC DNA]</scope>
    <scope>VARIANTS LEU-8 AND VAL-35</scope>
    <source>
        <strain>SK1</strain>
    </source>
</reference>
<reference key="2">
    <citation type="journal article" date="1996" name="Yeast">
        <title>The sequence of a 21.3 kb DNA fragment from the left arm of yeast chromosome XIV reveals LEU4, MET4, POL1, RAS2, and six new open reading frames.</title>
        <authorList>
            <person name="Saiz J.E."/>
            <person name="Buitrago M.J."/>
            <person name="Soler A."/>
            <person name="del Rey F."/>
            <person name="Revuelta J.L."/>
        </authorList>
    </citation>
    <scope>NUCLEOTIDE SEQUENCE [GENOMIC DNA]</scope>
    <source>
        <strain>ATCC 96604 / S288c / FY1679</strain>
    </source>
</reference>
<reference key="3">
    <citation type="journal article" date="1997" name="Nature">
        <title>The nucleotide sequence of Saccharomyces cerevisiae chromosome XIV and its evolutionary implications.</title>
        <authorList>
            <person name="Philippsen P."/>
            <person name="Kleine K."/>
            <person name="Poehlmann R."/>
            <person name="Duesterhoeft A."/>
            <person name="Hamberg K."/>
            <person name="Hegemann J.H."/>
            <person name="Obermaier B."/>
            <person name="Urrestarazu L.A."/>
            <person name="Aert R."/>
            <person name="Albermann K."/>
            <person name="Altmann R."/>
            <person name="Andre B."/>
            <person name="Baladron V."/>
            <person name="Ballesta J.P.G."/>
            <person name="Becam A.-M."/>
            <person name="Beinhauer J.D."/>
            <person name="Boskovic J."/>
            <person name="Buitrago M.J."/>
            <person name="Bussereau F."/>
            <person name="Coster F."/>
            <person name="Crouzet M."/>
            <person name="D'Angelo M."/>
            <person name="Dal Pero F."/>
            <person name="De Antoni A."/>
            <person name="del Rey F."/>
            <person name="Doignon F."/>
            <person name="Domdey H."/>
            <person name="Dubois E."/>
            <person name="Fiedler T.A."/>
            <person name="Fleig U."/>
            <person name="Floeth M."/>
            <person name="Fritz C."/>
            <person name="Gaillardin C."/>
            <person name="Garcia-Cantalejo J.M."/>
            <person name="Glansdorff N."/>
            <person name="Goffeau A."/>
            <person name="Gueldener U."/>
            <person name="Herbert C.J."/>
            <person name="Heumann K."/>
            <person name="Heuss-Neitzel D."/>
            <person name="Hilbert H."/>
            <person name="Hinni K."/>
            <person name="Iraqui Houssaini I."/>
            <person name="Jacquet M."/>
            <person name="Jimenez A."/>
            <person name="Jonniaux J.-L."/>
            <person name="Karpfinger-Hartl L."/>
            <person name="Lanfranchi G."/>
            <person name="Lepingle A."/>
            <person name="Levesque H."/>
            <person name="Lyck R."/>
            <person name="Maftahi M."/>
            <person name="Mallet L."/>
            <person name="Maurer C.T.C."/>
            <person name="Messenguy F."/>
            <person name="Mewes H.-W."/>
            <person name="Moestl D."/>
            <person name="Nasr F."/>
            <person name="Nicaud J.-M."/>
            <person name="Niedenthal R.K."/>
            <person name="Pandolfo D."/>
            <person name="Pierard A."/>
            <person name="Piravandi E."/>
            <person name="Planta R.J."/>
            <person name="Pohl T.M."/>
            <person name="Purnelle B."/>
            <person name="Rebischung C."/>
            <person name="Remacha M.A."/>
            <person name="Revuelta J.L."/>
            <person name="Rinke M."/>
            <person name="Saiz J.E."/>
            <person name="Sartorello F."/>
            <person name="Scherens B."/>
            <person name="Sen-Gupta M."/>
            <person name="Soler-Mira A."/>
            <person name="Urbanus J.H.M."/>
            <person name="Valle G."/>
            <person name="Van Dyck L."/>
            <person name="Verhasselt P."/>
            <person name="Vierendeels F."/>
            <person name="Vissers S."/>
            <person name="Voet M."/>
            <person name="Volckaert G."/>
            <person name="Wach A."/>
            <person name="Wambutt R."/>
            <person name="Wedler H."/>
            <person name="Zollner A."/>
            <person name="Hani J."/>
        </authorList>
    </citation>
    <scope>NUCLEOTIDE SEQUENCE [LARGE SCALE GENOMIC DNA]</scope>
    <source>
        <strain>ATCC 204508 / S288c</strain>
    </source>
</reference>
<reference key="4">
    <citation type="journal article" date="2014" name="G3 (Bethesda)">
        <title>The reference genome sequence of Saccharomyces cerevisiae: Then and now.</title>
        <authorList>
            <person name="Engel S.R."/>
            <person name="Dietrich F.S."/>
            <person name="Fisk D.G."/>
            <person name="Binkley G."/>
            <person name="Balakrishnan R."/>
            <person name="Costanzo M.C."/>
            <person name="Dwight S.S."/>
            <person name="Hitz B.C."/>
            <person name="Karra K."/>
            <person name="Nash R.S."/>
            <person name="Weng S."/>
            <person name="Wong E.D."/>
            <person name="Lloyd P."/>
            <person name="Skrzypek M.S."/>
            <person name="Miyasato S.R."/>
            <person name="Simison M."/>
            <person name="Cherry J.M."/>
        </authorList>
    </citation>
    <scope>GENOME REANNOTATION</scope>
    <source>
        <strain>ATCC 204508 / S288c</strain>
    </source>
</reference>
<reference key="5">
    <citation type="journal article" date="2007" name="Genome Res.">
        <title>Approaching a complete repository of sequence-verified protein-encoding clones for Saccharomyces cerevisiae.</title>
        <authorList>
            <person name="Hu Y."/>
            <person name="Rolfs A."/>
            <person name="Bhullar B."/>
            <person name="Murthy T.V.S."/>
            <person name="Zhu C."/>
            <person name="Berger M.F."/>
            <person name="Camargo A.A."/>
            <person name="Kelley F."/>
            <person name="McCarron S."/>
            <person name="Jepson D."/>
            <person name="Richardson A."/>
            <person name="Raphael J."/>
            <person name="Moreira D."/>
            <person name="Taycher E."/>
            <person name="Zuo D."/>
            <person name="Mohr S."/>
            <person name="Kane M.F."/>
            <person name="Williamson J."/>
            <person name="Simpson A.J.G."/>
            <person name="Bulyk M.L."/>
            <person name="Harlow E."/>
            <person name="Marsischky G."/>
            <person name="Kolodner R.D."/>
            <person name="LaBaer J."/>
        </authorList>
    </citation>
    <scope>NUCLEOTIDE SEQUENCE [GENOMIC DNA]</scope>
    <source>
        <strain>ATCC 204508 / S288c</strain>
    </source>
</reference>
<reference key="6">
    <citation type="journal article" date="1996" name="Yeast">
        <title>Sequence analysis of a 14.2 kb fragment of Saccharomyces cerevisiae chromosome XIV that includes the ypt53, tRNALeu and gsr m2 genes and four new open reading frames.</title>
        <authorList>
            <person name="Garcia-Cantalejo J.M."/>
            <person name="Boskovic J."/>
            <person name="Jimenez A."/>
        </authorList>
    </citation>
    <scope>NUCLEOTIDE SEQUENCE [GENOMIC DNA] OF 1-20</scope>
</reference>
<reference key="7">
    <citation type="journal article" date="2000" name="Mol. Cell. Biol.">
        <title>Three yeast proteins related to the human candidate tumor suppressor p33(ING1) are associated with histone acetyltransferase activities.</title>
        <authorList>
            <person name="Loewith R."/>
            <person name="Meijer M."/>
            <person name="Lees-Miller S.P."/>
            <person name="Riabowol K."/>
            <person name="Young D."/>
        </authorList>
    </citation>
    <scope>FUNCTION</scope>
</reference>
<reference key="8">
    <citation type="journal article" date="2001" name="J. Biol. Chem.">
        <title>Pho23 is associated with the Rpd3 histone deacetylase and is required for its normal function in regulation of gene expression and silencing in Saccharomyces cerevisiae.</title>
        <authorList>
            <person name="Loewith R."/>
            <person name="Smith J.S."/>
            <person name="Meijer M."/>
            <person name="Williams T.J."/>
            <person name="Bachman N."/>
            <person name="Boeke J.D."/>
            <person name="Young D."/>
        </authorList>
    </citation>
    <scope>FUNCTION</scope>
    <scope>IDENTIFICATION IN THE RPD3 COMPLEX</scope>
</reference>
<reference key="9">
    <citation type="journal article" date="2003" name="J. Biol. Chem.">
        <title>Opposite role of yeast ING family members in p53-dependent transcriptional activation.</title>
        <authorList>
            <person name="Nourani A."/>
            <person name="Howe L."/>
            <person name="Pray-Grant M.G."/>
            <person name="Workman J.L."/>
            <person name="Grant P.A."/>
            <person name="Cote J."/>
        </authorList>
    </citation>
    <scope>FUNCTION</scope>
    <scope>IDENTIFICATION IN THE RPD3 COMPLEX</scope>
    <scope>IDENTIFICATION BY MASS SPECTROMETRY</scope>
</reference>
<reference key="10">
    <citation type="journal article" date="2003" name="Nature">
        <title>Global analysis of protein localization in budding yeast.</title>
        <authorList>
            <person name="Huh W.-K."/>
            <person name="Falvo J.V."/>
            <person name="Gerke L.C."/>
            <person name="Carroll A.S."/>
            <person name="Howson R.W."/>
            <person name="Weissman J.S."/>
            <person name="O'Shea E.K."/>
        </authorList>
    </citation>
    <scope>SUBCELLULAR LOCATION [LARGE SCALE ANALYSIS]</scope>
</reference>
<reference key="11">
    <citation type="journal article" date="2003" name="Nature">
        <title>Global analysis of protein expression in yeast.</title>
        <authorList>
            <person name="Ghaemmaghami S."/>
            <person name="Huh W.-K."/>
            <person name="Bower K."/>
            <person name="Howson R.W."/>
            <person name="Belle A."/>
            <person name="Dephoure N."/>
            <person name="O'Shea E.K."/>
            <person name="Weissman J.S."/>
        </authorList>
    </citation>
    <scope>LEVEL OF PROTEIN EXPRESSION [LARGE SCALE ANALYSIS]</scope>
</reference>
<reference key="12">
    <citation type="journal article" date="2005" name="Biochim. Biophys. Acta">
        <title>Stable incorporation of sequence specific repressors Ash1 and Ume6 into the Rpd3L complex.</title>
        <authorList>
            <person name="Carrozza M.J."/>
            <person name="Florens L."/>
            <person name="Swanson S.K."/>
            <person name="Shia W.-J."/>
            <person name="Anderson S."/>
            <person name="Yates J."/>
            <person name="Washburn M.P."/>
            <person name="Workman J.L."/>
        </authorList>
    </citation>
    <scope>IDENTIFICATION IN THE RPD3C(L) COMPLEX</scope>
    <scope>IDENTIFICATION BY MASS SPECTROMETRY</scope>
</reference>
<reference key="13">
    <citation type="journal article" date="2005" name="Cell">
        <title>Cotranscriptional set2 methylation of histone H3 lysine 36 recruits a repressive Rpd3 complex.</title>
        <authorList>
            <person name="Keogh M.-C."/>
            <person name="Kurdistani S.K."/>
            <person name="Morris S.A."/>
            <person name="Ahn S.H."/>
            <person name="Podolny V."/>
            <person name="Collins S.R."/>
            <person name="Schuldiner M."/>
            <person name="Chin K."/>
            <person name="Punna T."/>
            <person name="Thompson N.J."/>
            <person name="Boone C."/>
            <person name="Emili A."/>
            <person name="Weissman J.S."/>
            <person name="Hughes T.R."/>
            <person name="Strahl B.D."/>
            <person name="Grunstein M."/>
            <person name="Greenblatt J.F."/>
            <person name="Buratowski S."/>
            <person name="Krogan N.J."/>
        </authorList>
    </citation>
    <scope>IDENTIFICATION IN THE RPD3C(L) COMPLEX</scope>
    <scope>IDENTIFICATION BY MASS SPECTROMETRY</scope>
</reference>
<reference key="14">
    <citation type="journal article" date="2006" name="Nature">
        <title>ING2 PHD domain links histone H3 lysine 4 methylation to active gene repression.</title>
        <authorList>
            <person name="Shi X."/>
            <person name="Hong T."/>
            <person name="Walter K.L."/>
            <person name="Ewalt M."/>
            <person name="Michishita E."/>
            <person name="Hung T."/>
            <person name="Carney D."/>
            <person name="Pena P."/>
            <person name="Lan F."/>
            <person name="Kaadige M.R."/>
            <person name="Lacoste N."/>
            <person name="Cayrou C."/>
            <person name="Davrazou F."/>
            <person name="Saha A."/>
            <person name="Cairns B.R."/>
            <person name="Ayer D.E."/>
            <person name="Kutateladze T.G."/>
            <person name="Shi Y."/>
            <person name="Cote J."/>
            <person name="Chua K.F."/>
            <person name="Gozani O."/>
        </authorList>
    </citation>
    <scope>DOMAIN PHD-TYPE ZINC-FINGER</scope>
    <scope>INTERACTION WITH HISTONES H3K4ME3 AND H3K4ME2</scope>
</reference>
<reference key="15">
    <citation type="journal article" date="2008" name="Mol. Cell. Proteomics">
        <title>A multidimensional chromatography technology for in-depth phosphoproteome analysis.</title>
        <authorList>
            <person name="Albuquerque C.P."/>
            <person name="Smolka M.B."/>
            <person name="Payne S.H."/>
            <person name="Bafna V."/>
            <person name="Eng J."/>
            <person name="Zhou H."/>
        </authorList>
    </citation>
    <scope>IDENTIFICATION BY MASS SPECTROMETRY [LARGE SCALE ANALYSIS]</scope>
</reference>
<protein>
    <recommendedName>
        <fullName>Transcriptional regulatory protein PHO23</fullName>
    </recommendedName>
</protein>
<name>PHO23_YEAST</name>
<sequence length="330" mass="37024">MSSPANLFPGLNDITDVLEEFPLATSRYLTLLHEIDAKCVHSMPNLNERIDKFLKKDFNKDHQTQVRLLNNINKIYEELMPSLEEKMHVSSIMLDNLDRLTSRLELAYEVAIKNTEIPRGLRLGVDNHPAMHLHHELMEKIESKSNSKSSQALKSESRREAMAANRRQGEHYSASTHQQDDSKNDANYGGSRHESQDHTGNNTNSRKRANAANTNNADPETKKRKRRVATTAVSPSTISTATAVNNGRIGTSTASRGVSSVGNSNNSRISRPKTNDYGEPLYCYCNQVAYGEMVGCDGADCELEWFHLPCIGLETLPKGKWYCDDCKKKL</sequence>
<keyword id="KW-0002">3D-structure</keyword>
<keyword id="KW-0156">Chromatin regulator</keyword>
<keyword id="KW-0479">Metal-binding</keyword>
<keyword id="KW-0539">Nucleus</keyword>
<keyword id="KW-1185">Reference proteome</keyword>
<keyword id="KW-0678">Repressor</keyword>
<keyword id="KW-0804">Transcription</keyword>
<keyword id="KW-0805">Transcription regulation</keyword>
<keyword id="KW-0862">Zinc</keyword>
<keyword id="KW-0863">Zinc-finger</keyword>
<organism>
    <name type="scientific">Saccharomyces cerevisiae (strain ATCC 204508 / S288c)</name>
    <name type="common">Baker's yeast</name>
    <dbReference type="NCBI Taxonomy" id="559292"/>
    <lineage>
        <taxon>Eukaryota</taxon>
        <taxon>Fungi</taxon>
        <taxon>Dikarya</taxon>
        <taxon>Ascomycota</taxon>
        <taxon>Saccharomycotina</taxon>
        <taxon>Saccharomycetes</taxon>
        <taxon>Saccharomycetales</taxon>
        <taxon>Saccharomycetaceae</taxon>
        <taxon>Saccharomyces</taxon>
    </lineage>
</organism>
<proteinExistence type="evidence at protein level"/>
<feature type="chain" id="PRO_0000203440" description="Transcriptional regulatory protein PHO23">
    <location>
        <begin position="1"/>
        <end position="330"/>
    </location>
</feature>
<feature type="zinc finger region" description="PHD-type" evidence="2">
    <location>
        <begin position="280"/>
        <end position="329"/>
    </location>
</feature>
<feature type="region of interest" description="Disordered" evidence="3">
    <location>
        <begin position="139"/>
        <end position="272"/>
    </location>
</feature>
<feature type="compositionally biased region" description="Polar residues" evidence="3">
    <location>
        <begin position="231"/>
        <end position="254"/>
    </location>
</feature>
<feature type="compositionally biased region" description="Low complexity" evidence="3">
    <location>
        <begin position="255"/>
        <end position="269"/>
    </location>
</feature>
<feature type="binding site" evidence="1">
    <location>
        <position position="283"/>
    </location>
    <ligand>
        <name>Zn(2+)</name>
        <dbReference type="ChEBI" id="CHEBI:29105"/>
        <label>1</label>
    </ligand>
</feature>
<feature type="binding site" evidence="1">
    <location>
        <position position="285"/>
    </location>
    <ligand>
        <name>Zn(2+)</name>
        <dbReference type="ChEBI" id="CHEBI:29105"/>
        <label>1</label>
    </ligand>
</feature>
<feature type="binding site" evidence="1">
    <location>
        <position position="296"/>
    </location>
    <ligand>
        <name>Zn(2+)</name>
        <dbReference type="ChEBI" id="CHEBI:29105"/>
        <label>2</label>
    </ligand>
</feature>
<feature type="binding site" evidence="1">
    <location>
        <position position="301"/>
    </location>
    <ligand>
        <name>Zn(2+)</name>
        <dbReference type="ChEBI" id="CHEBI:29105"/>
        <label>2</label>
    </ligand>
</feature>
<feature type="binding site" evidence="1">
    <location>
        <position position="307"/>
    </location>
    <ligand>
        <name>Zn(2+)</name>
        <dbReference type="ChEBI" id="CHEBI:29105"/>
        <label>1</label>
    </ligand>
</feature>
<feature type="binding site" evidence="1">
    <location>
        <position position="310"/>
    </location>
    <ligand>
        <name>Zn(2+)</name>
        <dbReference type="ChEBI" id="CHEBI:29105"/>
        <label>1</label>
    </ligand>
</feature>
<feature type="binding site" evidence="1">
    <location>
        <position position="323"/>
    </location>
    <ligand>
        <name>Zn(2+)</name>
        <dbReference type="ChEBI" id="CHEBI:29105"/>
        <label>2</label>
    </ligand>
</feature>
<feature type="binding site" evidence="1">
    <location>
        <position position="326"/>
    </location>
    <ligand>
        <name>Zn(2+)</name>
        <dbReference type="ChEBI" id="CHEBI:29105"/>
        <label>2</label>
    </ligand>
</feature>
<feature type="site" description="Histone H3K4me3 binding" evidence="1">
    <location>
        <position position="282"/>
    </location>
</feature>
<feature type="site" description="Histone H3K4me3 binding" evidence="1">
    <location>
        <position position="293"/>
    </location>
</feature>
<feature type="site" description="Histone H3K4me3 binding" evidence="1">
    <location>
        <position position="297"/>
    </location>
</feature>
<feature type="site" description="Histone H3K4me3 binding" evidence="1">
    <location>
        <position position="305"/>
    </location>
</feature>
<feature type="sequence variant" description="In strain: SK1." evidence="9">
    <original>F</original>
    <variation>L</variation>
    <location>
        <position position="8"/>
    </location>
</feature>
<feature type="sequence variant" description="In strain: SK1." evidence="9">
    <original>I</original>
    <variation>V</variation>
    <location>
        <position position="35"/>
    </location>
</feature>
<feature type="helix" evidence="14">
    <location>
        <begin position="9"/>
        <end position="36"/>
    </location>
</feature>
<feature type="turn" evidence="14">
    <location>
        <begin position="37"/>
        <end position="42"/>
    </location>
</feature>
<feature type="helix" evidence="14">
    <location>
        <begin position="43"/>
        <end position="54"/>
    </location>
</feature>
<feature type="helix" evidence="14">
    <location>
        <begin position="65"/>
        <end position="79"/>
    </location>
</feature>
<feature type="helix" evidence="14">
    <location>
        <begin position="82"/>
        <end position="113"/>
    </location>
</feature>
<feature type="turn" evidence="14">
    <location>
        <begin position="119"/>
        <end position="121"/>
    </location>
</feature>
<feature type="helix" evidence="14">
    <location>
        <begin position="132"/>
        <end position="146"/>
    </location>
</feature>
<gene>
    <name type="primary">PHO23</name>
    <name type="ordered locus">YNL097C</name>
    <name type="ORF">N2205</name>
</gene>